<protein>
    <recommendedName>
        <fullName evidence="1">DNA-directed RNA polymerase subunit beta'</fullName>
        <shortName evidence="1">RNAP subunit beta'</shortName>
        <ecNumber evidence="1">2.7.7.6</ecNumber>
    </recommendedName>
    <alternativeName>
        <fullName evidence="1">RNA polymerase subunit beta'</fullName>
    </alternativeName>
    <alternativeName>
        <fullName evidence="1">Transcriptase subunit beta'</fullName>
    </alternativeName>
</protein>
<reference key="1">
    <citation type="journal article" date="2009" name="Appl. Environ. Microbiol.">
        <title>Novel features of the polysaccharide-digesting gliding bacterium Flavobacterium johnsoniae as revealed by genome sequence analysis.</title>
        <authorList>
            <person name="McBride M.J."/>
            <person name="Xie G."/>
            <person name="Martens E.C."/>
            <person name="Lapidus A."/>
            <person name="Henrissat B."/>
            <person name="Rhodes R.G."/>
            <person name="Goltsman E."/>
            <person name="Wang W."/>
            <person name="Xu J."/>
            <person name="Hunnicutt D.W."/>
            <person name="Staroscik A.M."/>
            <person name="Hoover T.R."/>
            <person name="Cheng Y.Q."/>
            <person name="Stein J.L."/>
        </authorList>
    </citation>
    <scope>NUCLEOTIDE SEQUENCE [LARGE SCALE GENOMIC DNA]</scope>
    <source>
        <strain>ATCC 17061 / DSM 2064 / JCM 8514 / BCRC 14874 / CCUG 350202 / NBRC 14942 / NCIMB 11054 / UW101</strain>
    </source>
</reference>
<feature type="chain" id="PRO_0000353366" description="DNA-directed RNA polymerase subunit beta'">
    <location>
        <begin position="1"/>
        <end position="1436"/>
    </location>
</feature>
<feature type="binding site" evidence="1">
    <location>
        <position position="70"/>
    </location>
    <ligand>
        <name>Zn(2+)</name>
        <dbReference type="ChEBI" id="CHEBI:29105"/>
        <label>1</label>
    </ligand>
</feature>
<feature type="binding site" evidence="1">
    <location>
        <position position="72"/>
    </location>
    <ligand>
        <name>Zn(2+)</name>
        <dbReference type="ChEBI" id="CHEBI:29105"/>
        <label>1</label>
    </ligand>
</feature>
<feature type="binding site" evidence="1">
    <location>
        <position position="85"/>
    </location>
    <ligand>
        <name>Zn(2+)</name>
        <dbReference type="ChEBI" id="CHEBI:29105"/>
        <label>1</label>
    </ligand>
</feature>
<feature type="binding site" evidence="1">
    <location>
        <position position="88"/>
    </location>
    <ligand>
        <name>Zn(2+)</name>
        <dbReference type="ChEBI" id="CHEBI:29105"/>
        <label>1</label>
    </ligand>
</feature>
<feature type="binding site" evidence="1">
    <location>
        <position position="481"/>
    </location>
    <ligand>
        <name>Mg(2+)</name>
        <dbReference type="ChEBI" id="CHEBI:18420"/>
    </ligand>
</feature>
<feature type="binding site" evidence="1">
    <location>
        <position position="483"/>
    </location>
    <ligand>
        <name>Mg(2+)</name>
        <dbReference type="ChEBI" id="CHEBI:18420"/>
    </ligand>
</feature>
<feature type="binding site" evidence="1">
    <location>
        <position position="485"/>
    </location>
    <ligand>
        <name>Mg(2+)</name>
        <dbReference type="ChEBI" id="CHEBI:18420"/>
    </ligand>
</feature>
<feature type="binding site" evidence="1">
    <location>
        <position position="829"/>
    </location>
    <ligand>
        <name>Zn(2+)</name>
        <dbReference type="ChEBI" id="CHEBI:29105"/>
        <label>2</label>
    </ligand>
</feature>
<feature type="binding site" evidence="1">
    <location>
        <position position="903"/>
    </location>
    <ligand>
        <name>Zn(2+)</name>
        <dbReference type="ChEBI" id="CHEBI:29105"/>
        <label>2</label>
    </ligand>
</feature>
<feature type="binding site" evidence="1">
    <location>
        <position position="910"/>
    </location>
    <ligand>
        <name>Zn(2+)</name>
        <dbReference type="ChEBI" id="CHEBI:29105"/>
        <label>2</label>
    </ligand>
</feature>
<feature type="binding site" evidence="1">
    <location>
        <position position="913"/>
    </location>
    <ligand>
        <name>Zn(2+)</name>
        <dbReference type="ChEBI" id="CHEBI:29105"/>
        <label>2</label>
    </ligand>
</feature>
<dbReference type="EC" id="2.7.7.6" evidence="1"/>
<dbReference type="EMBL" id="CP000685">
    <property type="protein sequence ID" value="ABQ04976.1"/>
    <property type="molecule type" value="Genomic_DNA"/>
</dbReference>
<dbReference type="RefSeq" id="WP_012024016.1">
    <property type="nucleotide sequence ID" value="NZ_MUGZ01000012.1"/>
</dbReference>
<dbReference type="SMR" id="A5FIJ4"/>
<dbReference type="STRING" id="376686.Fjoh_1944"/>
<dbReference type="KEGG" id="fjo:Fjoh_1944"/>
<dbReference type="eggNOG" id="COG0086">
    <property type="taxonomic scope" value="Bacteria"/>
</dbReference>
<dbReference type="HOGENOM" id="CLU_000524_3_1_10"/>
<dbReference type="OrthoDB" id="9815296at2"/>
<dbReference type="Proteomes" id="UP000006694">
    <property type="component" value="Chromosome"/>
</dbReference>
<dbReference type="GO" id="GO:0000428">
    <property type="term" value="C:DNA-directed RNA polymerase complex"/>
    <property type="evidence" value="ECO:0007669"/>
    <property type="project" value="UniProtKB-KW"/>
</dbReference>
<dbReference type="GO" id="GO:0003677">
    <property type="term" value="F:DNA binding"/>
    <property type="evidence" value="ECO:0007669"/>
    <property type="project" value="UniProtKB-UniRule"/>
</dbReference>
<dbReference type="GO" id="GO:0003899">
    <property type="term" value="F:DNA-directed RNA polymerase activity"/>
    <property type="evidence" value="ECO:0007669"/>
    <property type="project" value="UniProtKB-UniRule"/>
</dbReference>
<dbReference type="GO" id="GO:0000287">
    <property type="term" value="F:magnesium ion binding"/>
    <property type="evidence" value="ECO:0007669"/>
    <property type="project" value="UniProtKB-UniRule"/>
</dbReference>
<dbReference type="GO" id="GO:0008270">
    <property type="term" value="F:zinc ion binding"/>
    <property type="evidence" value="ECO:0007669"/>
    <property type="project" value="UniProtKB-UniRule"/>
</dbReference>
<dbReference type="GO" id="GO:0006351">
    <property type="term" value="P:DNA-templated transcription"/>
    <property type="evidence" value="ECO:0007669"/>
    <property type="project" value="UniProtKB-UniRule"/>
</dbReference>
<dbReference type="CDD" id="cd02655">
    <property type="entry name" value="RNAP_beta'_C"/>
    <property type="match status" value="1"/>
</dbReference>
<dbReference type="CDD" id="cd01609">
    <property type="entry name" value="RNAP_beta'_N"/>
    <property type="match status" value="1"/>
</dbReference>
<dbReference type="Gene3D" id="1.10.132.30">
    <property type="match status" value="1"/>
</dbReference>
<dbReference type="Gene3D" id="1.10.150.390">
    <property type="match status" value="1"/>
</dbReference>
<dbReference type="Gene3D" id="1.10.1790.20">
    <property type="match status" value="1"/>
</dbReference>
<dbReference type="Gene3D" id="1.10.40.90">
    <property type="match status" value="1"/>
</dbReference>
<dbReference type="Gene3D" id="2.40.40.20">
    <property type="match status" value="1"/>
</dbReference>
<dbReference type="Gene3D" id="2.40.50.100">
    <property type="match status" value="3"/>
</dbReference>
<dbReference type="Gene3D" id="4.10.860.120">
    <property type="entry name" value="RNA polymerase II, clamp domain"/>
    <property type="match status" value="1"/>
</dbReference>
<dbReference type="Gene3D" id="1.10.274.100">
    <property type="entry name" value="RNA polymerase Rpb1, domain 3"/>
    <property type="match status" value="2"/>
</dbReference>
<dbReference type="HAMAP" id="MF_01322">
    <property type="entry name" value="RNApol_bact_RpoC"/>
    <property type="match status" value="1"/>
</dbReference>
<dbReference type="InterPro" id="IPR045867">
    <property type="entry name" value="DNA-dir_RpoC_beta_prime"/>
</dbReference>
<dbReference type="InterPro" id="IPR012754">
    <property type="entry name" value="DNA-dir_RpoC_beta_prime_bact"/>
</dbReference>
<dbReference type="InterPro" id="IPR000722">
    <property type="entry name" value="RNA_pol_asu"/>
</dbReference>
<dbReference type="InterPro" id="IPR006592">
    <property type="entry name" value="RNA_pol_N"/>
</dbReference>
<dbReference type="InterPro" id="IPR007080">
    <property type="entry name" value="RNA_pol_Rpb1_1"/>
</dbReference>
<dbReference type="InterPro" id="IPR007066">
    <property type="entry name" value="RNA_pol_Rpb1_3"/>
</dbReference>
<dbReference type="InterPro" id="IPR042102">
    <property type="entry name" value="RNA_pol_Rpb1_3_sf"/>
</dbReference>
<dbReference type="InterPro" id="IPR007083">
    <property type="entry name" value="RNA_pol_Rpb1_4"/>
</dbReference>
<dbReference type="InterPro" id="IPR007081">
    <property type="entry name" value="RNA_pol_Rpb1_5"/>
</dbReference>
<dbReference type="InterPro" id="IPR044893">
    <property type="entry name" value="RNA_pol_Rpb1_clamp_domain"/>
</dbReference>
<dbReference type="InterPro" id="IPR038120">
    <property type="entry name" value="Rpb1_funnel_sf"/>
</dbReference>
<dbReference type="NCBIfam" id="TIGR02386">
    <property type="entry name" value="rpoC_TIGR"/>
    <property type="match status" value="1"/>
</dbReference>
<dbReference type="PANTHER" id="PTHR19376">
    <property type="entry name" value="DNA-DIRECTED RNA POLYMERASE"/>
    <property type="match status" value="1"/>
</dbReference>
<dbReference type="PANTHER" id="PTHR19376:SF54">
    <property type="entry name" value="DNA-DIRECTED RNA POLYMERASE SUBUNIT BETA"/>
    <property type="match status" value="1"/>
</dbReference>
<dbReference type="Pfam" id="PF04997">
    <property type="entry name" value="RNA_pol_Rpb1_1"/>
    <property type="match status" value="1"/>
</dbReference>
<dbReference type="Pfam" id="PF00623">
    <property type="entry name" value="RNA_pol_Rpb1_2"/>
    <property type="match status" value="2"/>
</dbReference>
<dbReference type="Pfam" id="PF04983">
    <property type="entry name" value="RNA_pol_Rpb1_3"/>
    <property type="match status" value="1"/>
</dbReference>
<dbReference type="Pfam" id="PF05000">
    <property type="entry name" value="RNA_pol_Rpb1_4"/>
    <property type="match status" value="1"/>
</dbReference>
<dbReference type="Pfam" id="PF04998">
    <property type="entry name" value="RNA_pol_Rpb1_5"/>
    <property type="match status" value="1"/>
</dbReference>
<dbReference type="SMART" id="SM00663">
    <property type="entry name" value="RPOLA_N"/>
    <property type="match status" value="1"/>
</dbReference>
<dbReference type="SUPFAM" id="SSF64484">
    <property type="entry name" value="beta and beta-prime subunits of DNA dependent RNA-polymerase"/>
    <property type="match status" value="1"/>
</dbReference>
<proteinExistence type="inferred from homology"/>
<evidence type="ECO:0000255" key="1">
    <source>
        <dbReference type="HAMAP-Rule" id="MF_01322"/>
    </source>
</evidence>
<gene>
    <name evidence="1" type="primary">rpoC</name>
    <name type="ordered locus">Fjoh_1944</name>
</gene>
<accession>A5FIJ4</accession>
<name>RPOC_FLAJ1</name>
<sequence>MMNNRNNNKDKNPVKRFNKISIGLASPESILKESRGEVLKPETINYRTHKPERDGLFCERIFGPVKDFECACGKYKRIRYKGIICDRCGVEVTEKKVRRDRVGHINLVVPIAHIWYFRSLPNKIGYILGLPSKKLDMIIYYERYVVIQAGIAKNADGESLQRLDFLTEEEYLNILDTLPQENQYLDDLDPNKFVAKMGAECIMDLLARIDLDALSYELRHSANNETSKQRKTEALKRLQVVESFRESNENRENRPEWMIMKVVPVIPPELRPLVPLDGGRFATSDLNDLYRRVIIRNNRLKRLMEIKAPEVILRNEKRMLQESVDSLFDNTRKASAVKTESNRPLKSLSDSLKGKQGRFRQNLLGKRVDYSARSVIVVGPELKLYECGLPKDMASELYKPFVIRKLIERGIVKTVKSAKKIIDKKEPVVWDILENVIKGHPVLLNRAPTLHRLGIQAFQPKLIEGKAIQLHPLVCTAFNADFDGDQMAVHLPLGPEAILEAQLLMLASHNILNPANGAPITVPSQDMVLGLYYMTKERISTEDHIILGQDLTFYSAEEVNIALNEGRLELNARVKIRAKDFNDAGELVYKIIQTTAGRVLFNEVVPEAAGYINDVLTKKNLRDIIGHILSVTDVPTTAAFLDNMKDMGYKFAFRGGLSFSLGDIRIPEQKTKLIADAREQVEGISTNYNMGLITNNERYNQVIDVWTSANAQLTELAMKNIREDQQGFNSVYMMLDSGARGSKEQIRQLTGMRGLMAKPKKSTAGGGEIIENPILSNFKEGLSILEYFISTHGARKGLADTALKTADAGYLTRRLHDVSQDVIVNIEDCGTLRGVEVAALKKNEEIVESLGERILGRVALQDVINPLTNEVMVQSGQQITEAIVKTIEASPIEKVEVRSPLTCEALKGICAKCYGRNLATGKMTQRGEAVGVIAAQSIGEPGTQLTLRTFHVGGVAGGISEESSIVTRFAGRLEIEDLKTVKGEDSEGNAVDIVVSRSTELKLVDEGTGIVLNTHNIPYGSSIFVKDGETVGKGTVICKWDPYNGVIVSEFTGKIAYEDLEQGQSFMVEIDEQTGFQEKVISEARNKKLIPTLLVYGKEGELIRSYNLPVGAHLMVENGEKIKAGKVLVKIPRRSSKAGDITGGLPRITELLEARNPSNPAVVSEIDGVVSFGKIKRGNREIVIESKFGEIKKYLVKLSSQILVQENDFVRAGVPLSDGAITPDDILRIQGPAAVQQYLVNEIQEVYRLQGVKINDKHFEVVIRQMMRKVKVEDPGDTLFLEDQLIHTKDFILQNDKLYGMKVVEDAGDSSVLKPGQIISPRELRDENSLLKRTDKNLVVARDVITATATPVLQGITRASLQTKSFISAASFQETTKVLNEAAVAGKVDDLEGLKENVIVGHRIPAGTGMREYDNTIVGSKDDYNEMMANKEEYIY</sequence>
<organism>
    <name type="scientific">Flavobacterium johnsoniae (strain ATCC 17061 / DSM 2064 / JCM 8514 / BCRC 14874 / CCUG 350202 / NBRC 14942 / NCIMB 11054 / UW101)</name>
    <name type="common">Cytophaga johnsonae</name>
    <dbReference type="NCBI Taxonomy" id="376686"/>
    <lineage>
        <taxon>Bacteria</taxon>
        <taxon>Pseudomonadati</taxon>
        <taxon>Bacteroidota</taxon>
        <taxon>Flavobacteriia</taxon>
        <taxon>Flavobacteriales</taxon>
        <taxon>Flavobacteriaceae</taxon>
        <taxon>Flavobacterium</taxon>
    </lineage>
</organism>
<keyword id="KW-0240">DNA-directed RNA polymerase</keyword>
<keyword id="KW-0460">Magnesium</keyword>
<keyword id="KW-0479">Metal-binding</keyword>
<keyword id="KW-0548">Nucleotidyltransferase</keyword>
<keyword id="KW-0804">Transcription</keyword>
<keyword id="KW-0808">Transferase</keyword>
<keyword id="KW-0862">Zinc</keyword>
<comment type="function">
    <text evidence="1">DNA-dependent RNA polymerase catalyzes the transcription of DNA into RNA using the four ribonucleoside triphosphates as substrates.</text>
</comment>
<comment type="catalytic activity">
    <reaction evidence="1">
        <text>RNA(n) + a ribonucleoside 5'-triphosphate = RNA(n+1) + diphosphate</text>
        <dbReference type="Rhea" id="RHEA:21248"/>
        <dbReference type="Rhea" id="RHEA-COMP:14527"/>
        <dbReference type="Rhea" id="RHEA-COMP:17342"/>
        <dbReference type="ChEBI" id="CHEBI:33019"/>
        <dbReference type="ChEBI" id="CHEBI:61557"/>
        <dbReference type="ChEBI" id="CHEBI:140395"/>
        <dbReference type="EC" id="2.7.7.6"/>
    </reaction>
</comment>
<comment type="cofactor">
    <cofactor evidence="1">
        <name>Mg(2+)</name>
        <dbReference type="ChEBI" id="CHEBI:18420"/>
    </cofactor>
    <text evidence="1">Binds 1 Mg(2+) ion per subunit.</text>
</comment>
<comment type="cofactor">
    <cofactor evidence="1">
        <name>Zn(2+)</name>
        <dbReference type="ChEBI" id="CHEBI:29105"/>
    </cofactor>
    <text evidence="1">Binds 2 Zn(2+) ions per subunit.</text>
</comment>
<comment type="subunit">
    <text evidence="1">The RNAP catalytic core consists of 2 alpha, 1 beta, 1 beta' and 1 omega subunit. When a sigma factor is associated with the core the holoenzyme is formed, which can initiate transcription.</text>
</comment>
<comment type="similarity">
    <text evidence="1">Belongs to the RNA polymerase beta' chain family.</text>
</comment>